<comment type="function">
    <text evidence="2 4">Catalyzes the decarboxylation of malate to pyruvate (PubMed:17557829). In vitro, shows malolactic enzyme activity in the presence of NADPH. However, it is unlikely that this activity is of relevance in E.coli, which produces little NADPH (PubMed:33824210).</text>
</comment>
<comment type="catalytic activity">
    <reaction evidence="2">
        <text>(S)-malate + NADP(+) = pyruvate + CO2 + NADPH</text>
        <dbReference type="Rhea" id="RHEA:18253"/>
        <dbReference type="ChEBI" id="CHEBI:15361"/>
        <dbReference type="ChEBI" id="CHEBI:15589"/>
        <dbReference type="ChEBI" id="CHEBI:16526"/>
        <dbReference type="ChEBI" id="CHEBI:57783"/>
        <dbReference type="ChEBI" id="CHEBI:58349"/>
        <dbReference type="EC" id="1.1.1.40"/>
    </reaction>
</comment>
<comment type="catalytic activity">
    <reaction>
        <text>oxaloacetate + H(+) = pyruvate + CO2</text>
        <dbReference type="Rhea" id="RHEA:15641"/>
        <dbReference type="ChEBI" id="CHEBI:15361"/>
        <dbReference type="ChEBI" id="CHEBI:15378"/>
        <dbReference type="ChEBI" id="CHEBI:16452"/>
        <dbReference type="ChEBI" id="CHEBI:16526"/>
        <dbReference type="EC" id="1.1.1.40"/>
    </reaction>
</comment>
<comment type="cofactor">
    <cofactor evidence="2">
        <name>Mg(2+)</name>
        <dbReference type="ChEBI" id="CHEBI:18420"/>
    </cofactor>
    <cofactor evidence="2">
        <name>Mn(2+)</name>
        <dbReference type="ChEBI" id="CHEBI:29035"/>
    </cofactor>
    <text evidence="2">Divalent metal cations. Prefers magnesium or manganese.</text>
</comment>
<comment type="activity regulation">
    <text evidence="2">Inhibited by 4 mM Mg(2+) and acetyl-CoA, competitively inhibited by fumarate and oxaloacetate. Activated by glutamate and aspartate, glucose-6-phosphate, acetyl-phosphate and 2 mM KCl.</text>
</comment>
<comment type="biophysicochemical properties">
    <kinetics>
        <KM evidence="2">3.41 mM for L-malate</KM>
        <KM evidence="2">0.0415 mM for NADP</KM>
        <KM evidence="2">6.21 mM for pyruvate</KM>
    </kinetics>
    <phDependence>
        <text evidence="2">Optimum pH is 7.5 for L-malate.</text>
    </phDependence>
</comment>
<comment type="subunit">
    <text>Homooligomer, possibly an octamer.</text>
</comment>
<comment type="domain">
    <text evidence="2">The-C-terminal phosphate acetyltransferase domain is responsible for oligomerization, and is responsible for inhibition by acetyl-CoA and activation by glutamate, aspartate, and glucose-6-phosphate as shown by its deletion. The isolated domain does not catalyze the interconversion of acetyl-CoA and acetyl-phosphate.</text>
</comment>
<comment type="miscellaneous">
    <text>Cannot use NAD(+).</text>
</comment>
<comment type="similarity">
    <text evidence="5">In the N-terminal section; belongs to the malic enzymes family.</text>
</comment>
<comment type="similarity">
    <text evidence="5">In the C-terminal section; belongs to the phosphate acetyltransferase and butyryltransferase family.</text>
</comment>
<dbReference type="EC" id="1.1.1.40"/>
<dbReference type="EMBL" id="U00096">
    <property type="protein sequence ID" value="AAC75516.1"/>
    <property type="molecule type" value="Genomic_DNA"/>
</dbReference>
<dbReference type="EMBL" id="AP009048">
    <property type="protein sequence ID" value="BAA16337.2"/>
    <property type="molecule type" value="Genomic_DNA"/>
</dbReference>
<dbReference type="PIR" id="F65021">
    <property type="entry name" value="F65021"/>
</dbReference>
<dbReference type="RefSeq" id="NP_416958.1">
    <property type="nucleotide sequence ID" value="NC_000913.3"/>
</dbReference>
<dbReference type="RefSeq" id="WP_000342644.1">
    <property type="nucleotide sequence ID" value="NZ_LN832404.1"/>
</dbReference>
<dbReference type="PDB" id="8JZO">
    <property type="method" value="EM"/>
    <property type="resolution" value="2.86 A"/>
    <property type="chains" value="A/B/C/D/E/F=1-759"/>
</dbReference>
<dbReference type="PDBsum" id="8JZO"/>
<dbReference type="EMDB" id="EMD-36749"/>
<dbReference type="SMR" id="P76558"/>
<dbReference type="BioGRID" id="4260925">
    <property type="interactions" value="12"/>
</dbReference>
<dbReference type="DIP" id="DIP-10141N"/>
<dbReference type="FunCoup" id="P76558">
    <property type="interactions" value="489"/>
</dbReference>
<dbReference type="IntAct" id="P76558">
    <property type="interactions" value="10"/>
</dbReference>
<dbReference type="STRING" id="511145.b2463"/>
<dbReference type="BindingDB" id="P76558"/>
<dbReference type="ChEMBL" id="CHEMBL1687685"/>
<dbReference type="iPTMnet" id="P76558"/>
<dbReference type="jPOST" id="P76558"/>
<dbReference type="PaxDb" id="511145-b2463"/>
<dbReference type="EnsemblBacteria" id="AAC75516">
    <property type="protein sequence ID" value="AAC75516"/>
    <property type="gene ID" value="b2463"/>
</dbReference>
<dbReference type="GeneID" id="946947"/>
<dbReference type="KEGG" id="ecj:JW2447"/>
<dbReference type="KEGG" id="eco:b2463"/>
<dbReference type="KEGG" id="ecoc:C3026_13665"/>
<dbReference type="PATRIC" id="fig|1411691.4.peg.4277"/>
<dbReference type="EchoBASE" id="EB3945"/>
<dbReference type="eggNOG" id="COG0280">
    <property type="taxonomic scope" value="Bacteria"/>
</dbReference>
<dbReference type="eggNOG" id="COG0281">
    <property type="taxonomic scope" value="Bacteria"/>
</dbReference>
<dbReference type="InParanoid" id="P76558"/>
<dbReference type="OMA" id="RNYFAAM"/>
<dbReference type="OrthoDB" id="9805787at2"/>
<dbReference type="PhylomeDB" id="P76558"/>
<dbReference type="BioCyc" id="EcoCyc:MALIC-NADP-MONOMER"/>
<dbReference type="BioCyc" id="MetaCyc:MALIC-NADP-MONOMER"/>
<dbReference type="BRENDA" id="1.1.1.40">
    <property type="organism ID" value="2026"/>
</dbReference>
<dbReference type="SABIO-RK" id="P76558"/>
<dbReference type="PRO" id="PR:P76558"/>
<dbReference type="Proteomes" id="UP000000625">
    <property type="component" value="Chromosome"/>
</dbReference>
<dbReference type="GO" id="GO:0005829">
    <property type="term" value="C:cytosol"/>
    <property type="evidence" value="ECO:0007005"/>
    <property type="project" value="UniProtKB"/>
</dbReference>
<dbReference type="GO" id="GO:0016746">
    <property type="term" value="F:acyltransferase activity"/>
    <property type="evidence" value="ECO:0007669"/>
    <property type="project" value="InterPro"/>
</dbReference>
<dbReference type="GO" id="GO:0042802">
    <property type="term" value="F:identical protein binding"/>
    <property type="evidence" value="ECO:0000314"/>
    <property type="project" value="EcoCyc"/>
</dbReference>
<dbReference type="GO" id="GO:0004473">
    <property type="term" value="F:malate dehydrogenase (decarboxylating) (NADP+) activity"/>
    <property type="evidence" value="ECO:0000314"/>
    <property type="project" value="EcoCyc"/>
</dbReference>
<dbReference type="GO" id="GO:0043883">
    <property type="term" value="F:malolactic enzyme activity"/>
    <property type="evidence" value="ECO:0000314"/>
    <property type="project" value="EcoCyc"/>
</dbReference>
<dbReference type="GO" id="GO:0030145">
    <property type="term" value="F:manganese ion binding"/>
    <property type="evidence" value="ECO:0000314"/>
    <property type="project" value="EcoCyc"/>
</dbReference>
<dbReference type="GO" id="GO:0051287">
    <property type="term" value="F:NAD binding"/>
    <property type="evidence" value="ECO:0007669"/>
    <property type="project" value="InterPro"/>
</dbReference>
<dbReference type="GO" id="GO:0008948">
    <property type="term" value="F:oxaloacetate decarboxylase activity"/>
    <property type="evidence" value="ECO:0007669"/>
    <property type="project" value="RHEA"/>
</dbReference>
<dbReference type="GO" id="GO:0006108">
    <property type="term" value="P:malate metabolic process"/>
    <property type="evidence" value="ECO:0007669"/>
    <property type="project" value="InterPro"/>
</dbReference>
<dbReference type="CDD" id="cd05311">
    <property type="entry name" value="NAD_bind_2_malic_enz"/>
    <property type="match status" value="1"/>
</dbReference>
<dbReference type="FunFam" id="3.40.50.10380:FF:000003">
    <property type="entry name" value="NADP-dependent malic enzyme"/>
    <property type="match status" value="1"/>
</dbReference>
<dbReference type="FunFam" id="3.40.50.10750:FF:000002">
    <property type="entry name" value="NADP-dependent malic enzyme"/>
    <property type="match status" value="1"/>
</dbReference>
<dbReference type="FunFam" id="3.40.50.10950:FF:000002">
    <property type="entry name" value="NADP-dependent malic enzyme"/>
    <property type="match status" value="1"/>
</dbReference>
<dbReference type="FunFam" id="3.40.50.720:FF:000095">
    <property type="entry name" value="NADP-dependent malic enzyme"/>
    <property type="match status" value="1"/>
</dbReference>
<dbReference type="Gene3D" id="3.40.50.10950">
    <property type="match status" value="1"/>
</dbReference>
<dbReference type="Gene3D" id="3.40.50.10750">
    <property type="entry name" value="Isocitrate/Isopropylmalate dehydrogenase-like"/>
    <property type="match status" value="1"/>
</dbReference>
<dbReference type="Gene3D" id="3.40.50.10380">
    <property type="entry name" value="Malic enzyme, N-terminal domain"/>
    <property type="match status" value="1"/>
</dbReference>
<dbReference type="Gene3D" id="3.40.50.720">
    <property type="entry name" value="NAD(P)-binding Rossmann-like Domain"/>
    <property type="match status" value="1"/>
</dbReference>
<dbReference type="InterPro" id="IPR046346">
    <property type="entry name" value="Aminoacid_DH-like_N_sf"/>
</dbReference>
<dbReference type="InterPro" id="IPR051674">
    <property type="entry name" value="Malate_Decarboxylase"/>
</dbReference>
<dbReference type="InterPro" id="IPR015884">
    <property type="entry name" value="Malic_enzyme_CS"/>
</dbReference>
<dbReference type="InterPro" id="IPR012301">
    <property type="entry name" value="Malic_N_dom"/>
</dbReference>
<dbReference type="InterPro" id="IPR037062">
    <property type="entry name" value="Malic_N_dom_sf"/>
</dbReference>
<dbReference type="InterPro" id="IPR012302">
    <property type="entry name" value="Malic_NAD-bd"/>
</dbReference>
<dbReference type="InterPro" id="IPR045213">
    <property type="entry name" value="Malic_NAD-bd_bact_type"/>
</dbReference>
<dbReference type="InterPro" id="IPR012188">
    <property type="entry name" value="ME_PTA"/>
</dbReference>
<dbReference type="InterPro" id="IPR036291">
    <property type="entry name" value="NAD(P)-bd_dom_sf"/>
</dbReference>
<dbReference type="InterPro" id="IPR042113">
    <property type="entry name" value="P_AcTrfase_dom1"/>
</dbReference>
<dbReference type="InterPro" id="IPR042112">
    <property type="entry name" value="P_AcTrfase_dom2"/>
</dbReference>
<dbReference type="InterPro" id="IPR002505">
    <property type="entry name" value="PTA_PTB"/>
</dbReference>
<dbReference type="PANTHER" id="PTHR43237">
    <property type="entry name" value="NADP-DEPENDENT MALIC ENZYME"/>
    <property type="match status" value="1"/>
</dbReference>
<dbReference type="PANTHER" id="PTHR43237:SF4">
    <property type="entry name" value="NADP-DEPENDENT MALIC ENZYME"/>
    <property type="match status" value="1"/>
</dbReference>
<dbReference type="Pfam" id="PF00390">
    <property type="entry name" value="malic"/>
    <property type="match status" value="1"/>
</dbReference>
<dbReference type="Pfam" id="PF03949">
    <property type="entry name" value="Malic_M"/>
    <property type="match status" value="1"/>
</dbReference>
<dbReference type="Pfam" id="PF01515">
    <property type="entry name" value="PTA_PTB"/>
    <property type="match status" value="1"/>
</dbReference>
<dbReference type="PIRSF" id="PIRSF036684">
    <property type="entry name" value="ME_PTA"/>
    <property type="match status" value="1"/>
</dbReference>
<dbReference type="SMART" id="SM01274">
    <property type="entry name" value="malic"/>
    <property type="match status" value="1"/>
</dbReference>
<dbReference type="SMART" id="SM00919">
    <property type="entry name" value="Malic_M"/>
    <property type="match status" value="1"/>
</dbReference>
<dbReference type="SUPFAM" id="SSF53223">
    <property type="entry name" value="Aminoacid dehydrogenase-like, N-terminal domain"/>
    <property type="match status" value="1"/>
</dbReference>
<dbReference type="SUPFAM" id="SSF53659">
    <property type="entry name" value="Isocitrate/Isopropylmalate dehydrogenase-like"/>
    <property type="match status" value="1"/>
</dbReference>
<dbReference type="SUPFAM" id="SSF51735">
    <property type="entry name" value="NAD(P)-binding Rossmann-fold domains"/>
    <property type="match status" value="1"/>
</dbReference>
<dbReference type="PROSITE" id="PS00331">
    <property type="entry name" value="MALIC_ENZYMES"/>
    <property type="match status" value="1"/>
</dbReference>
<feature type="chain" id="PRO_0000160242" description="NADP-dependent malic enzyme">
    <location>
        <begin position="1"/>
        <end position="759"/>
    </location>
</feature>
<feature type="region of interest" description="Malic enzyme">
    <location>
        <begin position="1"/>
        <end position="428"/>
    </location>
</feature>
<feature type="region of interest" description="Phosphate acetyltransferase; required for oligomerization, inhibition by acetyl-CoA and activation by glutamate, aspartate, and glucose-6-phosphate">
    <location>
        <begin position="429"/>
        <end position="759"/>
    </location>
</feature>
<feature type="active site" description="Proton donor" evidence="1">
    <location>
        <position position="39"/>
    </location>
</feature>
<feature type="active site" description="Proton acceptor" evidence="1">
    <location>
        <position position="94"/>
    </location>
</feature>
<feature type="binding site" evidence="1">
    <location>
        <position position="136"/>
    </location>
    <ligand>
        <name>a divalent metal cation</name>
        <dbReference type="ChEBI" id="CHEBI:60240"/>
    </ligand>
</feature>
<feature type="binding site" evidence="1">
    <location>
        <position position="137"/>
    </location>
    <ligand>
        <name>a divalent metal cation</name>
        <dbReference type="ChEBI" id="CHEBI:60240"/>
    </ligand>
</feature>
<feature type="binding site" evidence="1">
    <location>
        <position position="162"/>
    </location>
    <ligand>
        <name>a divalent metal cation</name>
        <dbReference type="ChEBI" id="CHEBI:60240"/>
    </ligand>
</feature>
<feature type="binding site" evidence="1">
    <location>
        <begin position="195"/>
        <end position="198"/>
    </location>
    <ligand>
        <name>NADP(+)</name>
        <dbReference type="ChEBI" id="CHEBI:58349"/>
    </ligand>
</feature>
<feature type="binding site" evidence="1">
    <location>
        <position position="288"/>
    </location>
    <ligand>
        <name>NADP(+)</name>
        <dbReference type="ChEBI" id="CHEBI:58349"/>
    </ligand>
</feature>
<feature type="binding site" evidence="1">
    <location>
        <position position="320"/>
    </location>
    <ligand>
        <name>NADP(+)</name>
        <dbReference type="ChEBI" id="CHEBI:58349"/>
    </ligand>
</feature>
<feature type="modified residue" description="N6-acetyllysine" evidence="3">
    <location>
        <position position="56"/>
    </location>
</feature>
<keyword id="KW-0002">3D-structure</keyword>
<keyword id="KW-0007">Acetylation</keyword>
<keyword id="KW-0460">Magnesium</keyword>
<keyword id="KW-0464">Manganese</keyword>
<keyword id="KW-0479">Metal-binding</keyword>
<keyword id="KW-0511">Multifunctional enzyme</keyword>
<keyword id="KW-0521">NADP</keyword>
<keyword id="KW-0560">Oxidoreductase</keyword>
<keyword id="KW-1185">Reference proteome</keyword>
<evidence type="ECO:0000250" key="1">
    <source>
        <dbReference type="UniProtKB" id="P40927"/>
    </source>
</evidence>
<evidence type="ECO:0000269" key="2">
    <source>
    </source>
</evidence>
<evidence type="ECO:0000269" key="3">
    <source>
    </source>
</evidence>
<evidence type="ECO:0000269" key="4">
    <source>
    </source>
</evidence>
<evidence type="ECO:0000305" key="5"/>
<proteinExistence type="evidence at protein level"/>
<gene>
    <name type="primary">maeB</name>
    <name type="synonym">ypfF</name>
    <name type="ordered locus">b2463</name>
    <name type="ordered locus">JW2447</name>
</gene>
<sequence>MDDQLKQSALDFHEFPVPGKIQVSPTKPLATQRDLALAYSPGVAAPCLEIEKDPLKAYKYTARGNLVAVISNGTAVLGLGNIGALAGKPVMEGKGVLFKKFAGIDVFDIEVDELDPDKFIEVVAALEPTFGGINLEDIKAPECFYIEQKLRERMNIPVFHDDQHGTAIISTAAILNGLRVVEKNISDVRMVVSGAGAAAIACMNLLVALGLQKHNIVVCDSKGVIYQGREPNMAETKAAYAVVDDGKRTLDDVIEGADIFLGCSGPKVLTQEMVKKMARAPMILALANPEPEILPPLAKEVRPDAIICTGRSDYPNQVNNVLCFPFIFRGALDVGATAINEEMKLAAVRAIAELAHAEQSEVVASAYGDQDLSFGPEYIIPKPFDPRLIVKIAPAVAKAAMESGVATRPIADFDVYIDKLTEFVYKTNLFMKPIFSQARKAPKRVVLPEGEEARVLHATQELVTLGLAKPILIGRPNVIEMRIQKLGLQIKAGVDFEIVNNESDPRFKEYWTEYFQIMKRRGVTQEQAQRALISNPTVIGAIMVQRGEADAMICGTVGDYHEHFSVVKNVFGYRDGVHTAGAMNALLLPSGNTFIADTYVNDEPDAEELAEITLMAAETVRRFGIEPRVALLSHSNFGSSDCPSSSKMRQALELVRERAPELMIDGEMHGDAALVEAIRNDRMPDSSLKGSANILVMPNMEAARISYNLLRVSSSEGVTVGPVLMGVAKPVHVLTPIASVRRIVNMVALAVVEAQTQPL</sequence>
<name>MAO2_ECOLI</name>
<reference key="1">
    <citation type="journal article" date="1997" name="DNA Res.">
        <title>Construction of a contiguous 874-kb sequence of the Escherichia coli-K12 genome corresponding to 50.0-68.8 min on the linkage map and analysis of its sequence features.</title>
        <authorList>
            <person name="Yamamoto Y."/>
            <person name="Aiba H."/>
            <person name="Baba T."/>
            <person name="Hayashi K."/>
            <person name="Inada T."/>
            <person name="Isono K."/>
            <person name="Itoh T."/>
            <person name="Kimura S."/>
            <person name="Kitagawa M."/>
            <person name="Makino K."/>
            <person name="Miki T."/>
            <person name="Mitsuhashi N."/>
            <person name="Mizobuchi K."/>
            <person name="Mori H."/>
            <person name="Nakade S."/>
            <person name="Nakamura Y."/>
            <person name="Nashimoto H."/>
            <person name="Oshima T."/>
            <person name="Oyama S."/>
            <person name="Saito N."/>
            <person name="Sampei G."/>
            <person name="Satoh Y."/>
            <person name="Sivasundaram S."/>
            <person name="Tagami H."/>
            <person name="Takahashi H."/>
            <person name="Takeda J."/>
            <person name="Takemoto K."/>
            <person name="Uehara K."/>
            <person name="Wada C."/>
            <person name="Yamagata S."/>
            <person name="Horiuchi T."/>
        </authorList>
    </citation>
    <scope>NUCLEOTIDE SEQUENCE [LARGE SCALE GENOMIC DNA]</scope>
    <source>
        <strain>K12 / W3110 / ATCC 27325 / DSM 5911</strain>
    </source>
</reference>
<reference key="2">
    <citation type="journal article" date="1997" name="Science">
        <title>The complete genome sequence of Escherichia coli K-12.</title>
        <authorList>
            <person name="Blattner F.R."/>
            <person name="Plunkett G. III"/>
            <person name="Bloch C.A."/>
            <person name="Perna N.T."/>
            <person name="Burland V."/>
            <person name="Riley M."/>
            <person name="Collado-Vides J."/>
            <person name="Glasner J.D."/>
            <person name="Rode C.K."/>
            <person name="Mayhew G.F."/>
            <person name="Gregor J."/>
            <person name="Davis N.W."/>
            <person name="Kirkpatrick H.A."/>
            <person name="Goeden M.A."/>
            <person name="Rose D.J."/>
            <person name="Mau B."/>
            <person name="Shao Y."/>
        </authorList>
    </citation>
    <scope>NUCLEOTIDE SEQUENCE [LARGE SCALE GENOMIC DNA]</scope>
    <source>
        <strain>K12 / MG1655 / ATCC 47076</strain>
    </source>
</reference>
<reference key="3">
    <citation type="journal article" date="2006" name="Mol. Syst. Biol.">
        <title>Highly accurate genome sequences of Escherichia coli K-12 strains MG1655 and W3110.</title>
        <authorList>
            <person name="Hayashi K."/>
            <person name="Morooka N."/>
            <person name="Yamamoto Y."/>
            <person name="Fujita K."/>
            <person name="Isono K."/>
            <person name="Choi S."/>
            <person name="Ohtsubo E."/>
            <person name="Baba T."/>
            <person name="Wanner B.L."/>
            <person name="Mori H."/>
            <person name="Horiuchi T."/>
        </authorList>
    </citation>
    <scope>NUCLEOTIDE SEQUENCE [LARGE SCALE GENOMIC DNA]</scope>
    <source>
        <strain>K12 / W3110 / ATCC 27325 / DSM 5911</strain>
    </source>
</reference>
<reference key="4">
    <citation type="journal article" date="1979" name="J. Biochem.">
        <title>Studies on regulatory functions of malic enzymes. VI. Purification and molecular properties of NADP-linked malic enzyme from Escherichia coli W.</title>
        <authorList>
            <person name="Iwakura M."/>
            <person name="Hattori J."/>
            <person name="Arita Y."/>
            <person name="Tokushige M."/>
            <person name="Katsuki H."/>
        </authorList>
    </citation>
    <scope>CHARACTERIZATION</scope>
    <source>
        <strain>W / ATCC 11105 / DSM 1900</strain>
    </source>
</reference>
<reference key="5">
    <citation type="journal article" date="2007" name="J. Bacteriol.">
        <title>Escherichia coli malic enzymes: two isoforms with substantial differences in kinetic properties, metabolic regulation, and structure.</title>
        <authorList>
            <person name="Bologna F.P."/>
            <person name="Andreo C.S."/>
            <person name="Drincovich M.F."/>
        </authorList>
    </citation>
    <scope>FUNCTION</scope>
    <scope>CATALYTIC ACTIVITY</scope>
    <scope>BIOPHYSICOCHEMICAL PROPERTIES</scope>
    <scope>COFACTOR</scope>
    <scope>ACTIVITY REGULATION</scope>
    <scope>DOMAIN STRUCTURE</scope>
    <source>
        <strain>K12</strain>
    </source>
</reference>
<reference key="6">
    <citation type="journal article" date="2009" name="Mol. Cell. Proteomics">
        <title>Lysine acetylation is a highly abundant and evolutionarily conserved modification in Escherichia coli.</title>
        <authorList>
            <person name="Zhang J."/>
            <person name="Sprung R."/>
            <person name="Pei J."/>
            <person name="Tan X."/>
            <person name="Kim S."/>
            <person name="Zhu H."/>
            <person name="Liu C.F."/>
            <person name="Grishin N.V."/>
            <person name="Zhao Y."/>
        </authorList>
    </citation>
    <scope>ACETYLATION [LARGE SCALE ANALYSIS] AT LYS-56</scope>
    <scope>IDENTIFICATION BY MASS SPECTROMETRY</scope>
    <source>
        <strain>K12 / JW1106</strain>
        <strain>K12 / MG1655 / ATCC 47076</strain>
    </source>
</reference>
<reference key="7">
    <citation type="journal article" date="2021" name="MBio">
        <title>Bifunctional malic/malolactic enzyme provides a novel mechanism for NADPH-balancing in Bacillus subtilis.</title>
        <authorList>
            <person name="Hoerl M."/>
            <person name="Fuhrer T."/>
            <person name="Zamboni N."/>
        </authorList>
    </citation>
    <scope>FUNCTION AS A MALOACTIC ENZYME</scope>
</reference>
<accession>P76558</accession>
<accession>P78200</accession>
<accession>P78201</accession>
<protein>
    <recommendedName>
        <fullName>NADP-dependent malic enzyme</fullName>
        <shortName>NADP-ME</shortName>
        <ecNumber>1.1.1.40</ecNumber>
    </recommendedName>
</protein>
<organism>
    <name type="scientific">Escherichia coli (strain K12)</name>
    <dbReference type="NCBI Taxonomy" id="83333"/>
    <lineage>
        <taxon>Bacteria</taxon>
        <taxon>Pseudomonadati</taxon>
        <taxon>Pseudomonadota</taxon>
        <taxon>Gammaproteobacteria</taxon>
        <taxon>Enterobacterales</taxon>
        <taxon>Enterobacteriaceae</taxon>
        <taxon>Escherichia</taxon>
    </lineage>
</organism>